<evidence type="ECO:0000255" key="1">
    <source>
        <dbReference type="HAMAP-Rule" id="MF_00580"/>
    </source>
</evidence>
<organism>
    <name type="scientific">Methylobacillus flagellatus (strain ATCC 51484 / DSM 6875 / VKM B-1610 / KT)</name>
    <dbReference type="NCBI Taxonomy" id="265072"/>
    <lineage>
        <taxon>Bacteria</taxon>
        <taxon>Pseudomonadati</taxon>
        <taxon>Pseudomonadota</taxon>
        <taxon>Betaproteobacteria</taxon>
        <taxon>Nitrosomonadales</taxon>
        <taxon>Methylophilaceae</taxon>
        <taxon>Methylobacillus</taxon>
    </lineage>
</organism>
<accession>Q1H4F1</accession>
<comment type="function">
    <text evidence="1">Together with the chaperonin GroEL, plays an essential role in assisting protein folding. The GroEL-GroES system forms a nano-cage that allows encapsulation of the non-native substrate proteins and provides a physical environment optimized to promote and accelerate protein folding. GroES binds to the apical surface of the GroEL ring, thereby capping the opening of the GroEL channel.</text>
</comment>
<comment type="subunit">
    <text evidence="1">Heptamer of 7 subunits arranged in a ring. Interacts with the chaperonin GroEL.</text>
</comment>
<comment type="subcellular location">
    <subcellularLocation>
        <location evidence="1">Cytoplasm</location>
    </subcellularLocation>
</comment>
<comment type="similarity">
    <text evidence="1">Belongs to the GroES chaperonin family.</text>
</comment>
<gene>
    <name evidence="1" type="primary">groES</name>
    <name evidence="1" type="synonym">groS</name>
    <name type="ordered locus">Mfla_0365</name>
</gene>
<feature type="chain" id="PRO_1000025300" description="Co-chaperonin GroES">
    <location>
        <begin position="1"/>
        <end position="96"/>
    </location>
</feature>
<proteinExistence type="inferred from homology"/>
<dbReference type="EMBL" id="CP000284">
    <property type="protein sequence ID" value="ABE48636.1"/>
    <property type="molecule type" value="Genomic_DNA"/>
</dbReference>
<dbReference type="RefSeq" id="WP_011478733.1">
    <property type="nucleotide sequence ID" value="NC_007947.1"/>
</dbReference>
<dbReference type="SMR" id="Q1H4F1"/>
<dbReference type="STRING" id="265072.Mfla_0365"/>
<dbReference type="KEGG" id="mfa:Mfla_0365"/>
<dbReference type="eggNOG" id="COG0234">
    <property type="taxonomic scope" value="Bacteria"/>
</dbReference>
<dbReference type="HOGENOM" id="CLU_132825_1_0_4"/>
<dbReference type="OrthoDB" id="9806791at2"/>
<dbReference type="Proteomes" id="UP000002440">
    <property type="component" value="Chromosome"/>
</dbReference>
<dbReference type="GO" id="GO:0005737">
    <property type="term" value="C:cytoplasm"/>
    <property type="evidence" value="ECO:0007669"/>
    <property type="project" value="UniProtKB-SubCell"/>
</dbReference>
<dbReference type="GO" id="GO:0005524">
    <property type="term" value="F:ATP binding"/>
    <property type="evidence" value="ECO:0007669"/>
    <property type="project" value="InterPro"/>
</dbReference>
<dbReference type="GO" id="GO:0046872">
    <property type="term" value="F:metal ion binding"/>
    <property type="evidence" value="ECO:0007669"/>
    <property type="project" value="TreeGrafter"/>
</dbReference>
<dbReference type="GO" id="GO:0044183">
    <property type="term" value="F:protein folding chaperone"/>
    <property type="evidence" value="ECO:0007669"/>
    <property type="project" value="InterPro"/>
</dbReference>
<dbReference type="GO" id="GO:0051087">
    <property type="term" value="F:protein-folding chaperone binding"/>
    <property type="evidence" value="ECO:0007669"/>
    <property type="project" value="TreeGrafter"/>
</dbReference>
<dbReference type="GO" id="GO:0051082">
    <property type="term" value="F:unfolded protein binding"/>
    <property type="evidence" value="ECO:0007669"/>
    <property type="project" value="TreeGrafter"/>
</dbReference>
<dbReference type="GO" id="GO:0051085">
    <property type="term" value="P:chaperone cofactor-dependent protein refolding"/>
    <property type="evidence" value="ECO:0007669"/>
    <property type="project" value="TreeGrafter"/>
</dbReference>
<dbReference type="CDD" id="cd00320">
    <property type="entry name" value="cpn10"/>
    <property type="match status" value="1"/>
</dbReference>
<dbReference type="FunFam" id="2.30.33.40:FF:000001">
    <property type="entry name" value="10 kDa chaperonin"/>
    <property type="match status" value="1"/>
</dbReference>
<dbReference type="Gene3D" id="2.30.33.40">
    <property type="entry name" value="GroES chaperonin"/>
    <property type="match status" value="1"/>
</dbReference>
<dbReference type="HAMAP" id="MF_00580">
    <property type="entry name" value="CH10"/>
    <property type="match status" value="1"/>
</dbReference>
<dbReference type="InterPro" id="IPR020818">
    <property type="entry name" value="Chaperonin_GroES"/>
</dbReference>
<dbReference type="InterPro" id="IPR037124">
    <property type="entry name" value="Chaperonin_GroES_sf"/>
</dbReference>
<dbReference type="InterPro" id="IPR018369">
    <property type="entry name" value="Chaprnonin_Cpn10_CS"/>
</dbReference>
<dbReference type="InterPro" id="IPR011032">
    <property type="entry name" value="GroES-like_sf"/>
</dbReference>
<dbReference type="NCBIfam" id="NF001527">
    <property type="entry name" value="PRK00364.1-2"/>
    <property type="match status" value="1"/>
</dbReference>
<dbReference type="NCBIfam" id="NF001529">
    <property type="entry name" value="PRK00364.1-5"/>
    <property type="match status" value="1"/>
</dbReference>
<dbReference type="NCBIfam" id="NF001531">
    <property type="entry name" value="PRK00364.2-2"/>
    <property type="match status" value="1"/>
</dbReference>
<dbReference type="NCBIfam" id="NF001533">
    <property type="entry name" value="PRK00364.2-4"/>
    <property type="match status" value="1"/>
</dbReference>
<dbReference type="NCBIfam" id="NF001534">
    <property type="entry name" value="PRK00364.2-5"/>
    <property type="match status" value="1"/>
</dbReference>
<dbReference type="PANTHER" id="PTHR10772">
    <property type="entry name" value="10 KDA HEAT SHOCK PROTEIN"/>
    <property type="match status" value="1"/>
</dbReference>
<dbReference type="PANTHER" id="PTHR10772:SF58">
    <property type="entry name" value="CO-CHAPERONIN GROES"/>
    <property type="match status" value="1"/>
</dbReference>
<dbReference type="Pfam" id="PF00166">
    <property type="entry name" value="Cpn10"/>
    <property type="match status" value="1"/>
</dbReference>
<dbReference type="PRINTS" id="PR00297">
    <property type="entry name" value="CHAPERONIN10"/>
</dbReference>
<dbReference type="SMART" id="SM00883">
    <property type="entry name" value="Cpn10"/>
    <property type="match status" value="1"/>
</dbReference>
<dbReference type="SUPFAM" id="SSF50129">
    <property type="entry name" value="GroES-like"/>
    <property type="match status" value="1"/>
</dbReference>
<dbReference type="PROSITE" id="PS00681">
    <property type="entry name" value="CHAPERONINS_CPN10"/>
    <property type="match status" value="1"/>
</dbReference>
<name>CH10_METFK</name>
<protein>
    <recommendedName>
        <fullName evidence="1">Co-chaperonin GroES</fullName>
    </recommendedName>
    <alternativeName>
        <fullName evidence="1">10 kDa chaperonin</fullName>
    </alternativeName>
    <alternativeName>
        <fullName evidence="1">Chaperonin-10</fullName>
        <shortName evidence="1">Cpn10</shortName>
    </alternativeName>
</protein>
<keyword id="KW-0143">Chaperone</keyword>
<keyword id="KW-0963">Cytoplasm</keyword>
<keyword id="KW-1185">Reference proteome</keyword>
<sequence>MAIRPLQDRVIVKRLEEERKTASGIVIPDTAAEKPDQGEVIAVGPGKKDDNGKSIPLDVKVGDKVLFGKYAGQAVKVNGEEVLVLREDDILGIVEA</sequence>
<reference key="1">
    <citation type="submission" date="2006-03" db="EMBL/GenBank/DDBJ databases">
        <title>Complete sequence of Methylobacillus flagellatus KT.</title>
        <authorList>
            <consortium name="US DOE Joint Genome Institute"/>
            <person name="Copeland A."/>
            <person name="Lucas S."/>
            <person name="Lapidus A."/>
            <person name="Barry K."/>
            <person name="Detter J.C."/>
            <person name="Glavina del Rio T."/>
            <person name="Hammon N."/>
            <person name="Israni S."/>
            <person name="Dalin E."/>
            <person name="Tice H."/>
            <person name="Pitluck S."/>
            <person name="Brettin T."/>
            <person name="Bruce D."/>
            <person name="Han C."/>
            <person name="Tapia R."/>
            <person name="Saunders E."/>
            <person name="Gilna P."/>
            <person name="Schmutz J."/>
            <person name="Larimer F."/>
            <person name="Land M."/>
            <person name="Kyrpides N."/>
            <person name="Anderson I."/>
            <person name="Richardson P."/>
        </authorList>
    </citation>
    <scope>NUCLEOTIDE SEQUENCE [LARGE SCALE GENOMIC DNA]</scope>
    <source>
        <strain>ATCC 51484 / DSM 6875 / VKM B-1610 / KT</strain>
    </source>
</reference>